<keyword id="KW-0106">Calcium</keyword>
<keyword id="KW-0903">Direct protein sequencing</keyword>
<keyword id="KW-0479">Metal-binding</keyword>
<keyword id="KW-1185">Reference proteome</keyword>
<keyword id="KW-0677">Repeat</keyword>
<comment type="function">
    <text evidence="1">May function as calcium sensor and modulator, contributing to cellular calcium signaling. May function by interacting with other proteins, such as TPR-containing proteins, and indirectly play a role in many physiological processes. May also play a role in suppressing tumor cell growth (By similarity).</text>
</comment>
<comment type="subunit">
    <text evidence="1">Homodimer. Interacts with FKBP4. Interacts with PPP5C (via TPR repeats); the interaction is calcium-dependent and modulates PPP5C activity (By similarity). Interacts with TPPP; this interaction inhibits TPPP dimerization (By similarity).</text>
</comment>
<comment type="miscellaneous">
    <text>This protein binds two calcium ions.</text>
</comment>
<comment type="similarity">
    <text evidence="3">Belongs to the S-100 family.</text>
</comment>
<name>S10A2_BOVIN</name>
<feature type="chain" id="PRO_0000143970" description="Protein S100-A2">
    <location>
        <begin position="1"/>
        <end position="97"/>
    </location>
</feature>
<feature type="domain" description="EF-hand 1" evidence="3">
    <location>
        <begin position="12"/>
        <end position="47"/>
    </location>
</feature>
<feature type="domain" description="EF-hand 2" evidence="2">
    <location>
        <begin position="50"/>
        <end position="85"/>
    </location>
</feature>
<feature type="binding site" evidence="3">
    <location>
        <position position="28"/>
    </location>
    <ligand>
        <name>Ca(2+)</name>
        <dbReference type="ChEBI" id="CHEBI:29108"/>
        <label>1</label>
        <note>low affinity</note>
    </ligand>
</feature>
<feature type="binding site" evidence="3">
    <location>
        <position position="33"/>
    </location>
    <ligand>
        <name>Ca(2+)</name>
        <dbReference type="ChEBI" id="CHEBI:29108"/>
        <label>1</label>
        <note>low affinity</note>
    </ligand>
</feature>
<feature type="binding site" evidence="2">
    <location>
        <position position="63"/>
    </location>
    <ligand>
        <name>Ca(2+)</name>
        <dbReference type="ChEBI" id="CHEBI:29108"/>
        <label>2</label>
        <note>high affinity</note>
    </ligand>
</feature>
<feature type="binding site" evidence="2">
    <location>
        <position position="65"/>
    </location>
    <ligand>
        <name>Ca(2+)</name>
        <dbReference type="ChEBI" id="CHEBI:29108"/>
        <label>2</label>
        <note>high affinity</note>
    </ligand>
</feature>
<feature type="binding site" evidence="2">
    <location>
        <position position="67"/>
    </location>
    <ligand>
        <name>Ca(2+)</name>
        <dbReference type="ChEBI" id="CHEBI:29108"/>
        <label>2</label>
        <note>high affinity</note>
    </ligand>
</feature>
<feature type="binding site" evidence="2">
    <location>
        <position position="69"/>
    </location>
    <ligand>
        <name>Ca(2+)</name>
        <dbReference type="ChEBI" id="CHEBI:29108"/>
        <label>2</label>
        <note>high affinity</note>
    </ligand>
</feature>
<feature type="binding site" evidence="2">
    <location>
        <position position="74"/>
    </location>
    <ligand>
        <name>Ca(2+)</name>
        <dbReference type="ChEBI" id="CHEBI:29108"/>
        <label>2</label>
        <note>high affinity</note>
    </ligand>
</feature>
<proteinExistence type="evidence at protein level"/>
<sequence length="97" mass="10893">MSSPLEQALAVMVATFHKYSGQEGDKFKLSKGEMKELLHKELPSFVGEKVDEEGLKKLMGDLDENSDQQVDFQEYAVFLALITIMCNDFFQGSPARS</sequence>
<reference key="1">
    <citation type="journal article" date="1989" name="J. Cell Biol.">
        <title>Isolation of a new member of the S100 protein family: amino acid sequence, tissue, and subcellular distribution.</title>
        <authorList>
            <person name="Glenney J.R. Jr."/>
            <person name="Kindy M.S."/>
            <person name="Zokas L."/>
        </authorList>
    </citation>
    <scope>NUCLEOTIDE SEQUENCE [MRNA]</scope>
    <scope>PARTIAL PROTEIN SEQUENCE</scope>
    <source>
        <tissue>Kidney</tissue>
        <tissue>Lung</tissue>
    </source>
</reference>
<reference key="2">
    <citation type="submission" date="2005-08" db="EMBL/GenBank/DDBJ databases">
        <authorList>
            <consortium name="NIH - Mammalian Gene Collection (MGC) project"/>
        </authorList>
    </citation>
    <scope>NUCLEOTIDE SEQUENCE [LARGE SCALE MRNA]</scope>
    <source>
        <strain>Hereford</strain>
        <tissue>Testis</tissue>
    </source>
</reference>
<organism>
    <name type="scientific">Bos taurus</name>
    <name type="common">Bovine</name>
    <dbReference type="NCBI Taxonomy" id="9913"/>
    <lineage>
        <taxon>Eukaryota</taxon>
        <taxon>Metazoa</taxon>
        <taxon>Chordata</taxon>
        <taxon>Craniata</taxon>
        <taxon>Vertebrata</taxon>
        <taxon>Euteleostomi</taxon>
        <taxon>Mammalia</taxon>
        <taxon>Eutheria</taxon>
        <taxon>Laurasiatheria</taxon>
        <taxon>Artiodactyla</taxon>
        <taxon>Ruminantia</taxon>
        <taxon>Pecora</taxon>
        <taxon>Bovidae</taxon>
        <taxon>Bovinae</taxon>
        <taxon>Bos</taxon>
    </lineage>
</organism>
<accession>P10462</accession>
<accession>Q3T043</accession>
<dbReference type="EMBL" id="BC102570">
    <property type="protein sequence ID" value="AAI02571.1"/>
    <property type="molecule type" value="mRNA"/>
</dbReference>
<dbReference type="PIR" id="A30129">
    <property type="entry name" value="A30129"/>
</dbReference>
<dbReference type="RefSeq" id="NP_001029539.1">
    <property type="nucleotide sequence ID" value="NM_001034367.2"/>
</dbReference>
<dbReference type="RefSeq" id="XP_059739225.1">
    <property type="nucleotide sequence ID" value="XM_059883242.1"/>
</dbReference>
<dbReference type="SMR" id="P10462"/>
<dbReference type="FunCoup" id="P10462">
    <property type="interactions" value="26"/>
</dbReference>
<dbReference type="IntAct" id="P10462">
    <property type="interactions" value="1"/>
</dbReference>
<dbReference type="STRING" id="9913.ENSBTAP00000071742"/>
<dbReference type="PaxDb" id="9913-ENSBTAP00000000589"/>
<dbReference type="PeptideAtlas" id="P10462"/>
<dbReference type="GeneID" id="509860"/>
<dbReference type="KEGG" id="bta:509860"/>
<dbReference type="CTD" id="6273"/>
<dbReference type="VEuPathDB" id="HostDB:ENSBTAG00000037651"/>
<dbReference type="eggNOG" id="ENOG502S4AU">
    <property type="taxonomic scope" value="Eukaryota"/>
</dbReference>
<dbReference type="HOGENOM" id="CLU_138624_2_0_1"/>
<dbReference type="InParanoid" id="P10462"/>
<dbReference type="OMA" id="EFFQGCP"/>
<dbReference type="OrthoDB" id="26525at2759"/>
<dbReference type="TreeFam" id="TF332727"/>
<dbReference type="Proteomes" id="UP000009136">
    <property type="component" value="Chromosome 3"/>
</dbReference>
<dbReference type="Bgee" id="ENSBTAG00000037651">
    <property type="expression patterns" value="Expressed in urethra and 104 other cell types or tissues"/>
</dbReference>
<dbReference type="GO" id="GO:0005509">
    <property type="term" value="F:calcium ion binding"/>
    <property type="evidence" value="ECO:0000318"/>
    <property type="project" value="GO_Central"/>
</dbReference>
<dbReference type="GO" id="GO:0048306">
    <property type="term" value="F:calcium-dependent protein binding"/>
    <property type="evidence" value="ECO:0000318"/>
    <property type="project" value="GO_Central"/>
</dbReference>
<dbReference type="GO" id="GO:0046914">
    <property type="term" value="F:transition metal ion binding"/>
    <property type="evidence" value="ECO:0007669"/>
    <property type="project" value="InterPro"/>
</dbReference>
<dbReference type="GO" id="GO:0043542">
    <property type="term" value="P:endothelial cell migration"/>
    <property type="evidence" value="ECO:0000318"/>
    <property type="project" value="GO_Central"/>
</dbReference>
<dbReference type="CDD" id="cd00213">
    <property type="entry name" value="S-100"/>
    <property type="match status" value="1"/>
</dbReference>
<dbReference type="FunFam" id="1.10.238.10:FF:000044">
    <property type="entry name" value="Protein S100"/>
    <property type="match status" value="1"/>
</dbReference>
<dbReference type="Gene3D" id="1.10.238.10">
    <property type="entry name" value="EF-hand"/>
    <property type="match status" value="1"/>
</dbReference>
<dbReference type="InterPro" id="IPR011992">
    <property type="entry name" value="EF-hand-dom_pair"/>
</dbReference>
<dbReference type="InterPro" id="IPR018247">
    <property type="entry name" value="EF_Hand_1_Ca_BS"/>
</dbReference>
<dbReference type="InterPro" id="IPR002048">
    <property type="entry name" value="EF_hand_dom"/>
</dbReference>
<dbReference type="InterPro" id="IPR034325">
    <property type="entry name" value="S-100_dom"/>
</dbReference>
<dbReference type="InterPro" id="IPR001751">
    <property type="entry name" value="S100/CaBP7/8-like_CS"/>
</dbReference>
<dbReference type="InterPro" id="IPR013787">
    <property type="entry name" value="S100_Ca-bd_sub"/>
</dbReference>
<dbReference type="PANTHER" id="PTHR11639:SF59">
    <property type="entry name" value="PROTEIN S100-A2"/>
    <property type="match status" value="1"/>
</dbReference>
<dbReference type="PANTHER" id="PTHR11639">
    <property type="entry name" value="S100 CALCIUM-BINDING PROTEIN"/>
    <property type="match status" value="1"/>
</dbReference>
<dbReference type="Pfam" id="PF01023">
    <property type="entry name" value="S_100"/>
    <property type="match status" value="1"/>
</dbReference>
<dbReference type="SMART" id="SM01394">
    <property type="entry name" value="S_100"/>
    <property type="match status" value="1"/>
</dbReference>
<dbReference type="SUPFAM" id="SSF47473">
    <property type="entry name" value="EF-hand"/>
    <property type="match status" value="1"/>
</dbReference>
<dbReference type="PROSITE" id="PS00018">
    <property type="entry name" value="EF_HAND_1"/>
    <property type="match status" value="1"/>
</dbReference>
<dbReference type="PROSITE" id="PS50222">
    <property type="entry name" value="EF_HAND_2"/>
    <property type="match status" value="1"/>
</dbReference>
<dbReference type="PROSITE" id="PS00303">
    <property type="entry name" value="S100_CABP"/>
    <property type="match status" value="1"/>
</dbReference>
<evidence type="ECO:0000250" key="1"/>
<evidence type="ECO:0000255" key="2">
    <source>
        <dbReference type="PROSITE-ProRule" id="PRU00448"/>
    </source>
</evidence>
<evidence type="ECO:0000305" key="3"/>
<gene>
    <name type="primary">S100A2</name>
</gene>
<protein>
    <recommendedName>
        <fullName>Protein S100-A2</fullName>
    </recommendedName>
    <alternativeName>
        <fullName>Protein S-100L</fullName>
    </alternativeName>
    <alternativeName>
        <fullName>S100 calcium-binding protein A2</fullName>
    </alternativeName>
</protein>